<accession>Q0PXX8</accession>
<protein>
    <recommendedName>
        <fullName evidence="1">Small ribosomal subunit protein uS2</fullName>
    </recommendedName>
    <alternativeName>
        <fullName evidence="3">40S ribosomal protein SA</fullName>
    </alternativeName>
</protein>
<reference key="1">
    <citation type="submission" date="2006-06" db="EMBL/GenBank/DDBJ databases">
        <title>Ribosomal proteins of the Asian citrus psyllid, Diaphorina citri.</title>
        <authorList>
            <person name="Hunter W.B."/>
            <person name="Hunnicutt L.E."/>
            <person name="Hall D.G."/>
        </authorList>
    </citation>
    <scope>NUCLEOTIDE SEQUENCE [MRNA]</scope>
</reference>
<organism>
    <name type="scientific">Diaphorina citri</name>
    <name type="common">Asian citrus psyllid</name>
    <dbReference type="NCBI Taxonomy" id="121845"/>
    <lineage>
        <taxon>Eukaryota</taxon>
        <taxon>Metazoa</taxon>
        <taxon>Ecdysozoa</taxon>
        <taxon>Arthropoda</taxon>
        <taxon>Hexapoda</taxon>
        <taxon>Insecta</taxon>
        <taxon>Pterygota</taxon>
        <taxon>Neoptera</taxon>
        <taxon>Paraneoptera</taxon>
        <taxon>Hemiptera</taxon>
        <taxon>Sternorrhyncha</taxon>
        <taxon>Psylloidea</taxon>
        <taxon>Psyllidae</taxon>
        <taxon>Diaphorininae</taxon>
        <taxon>Diaphorina</taxon>
    </lineage>
</organism>
<evidence type="ECO:0000255" key="1">
    <source>
        <dbReference type="HAMAP-Rule" id="MF_03015"/>
    </source>
</evidence>
<evidence type="ECO:0000256" key="2">
    <source>
        <dbReference type="SAM" id="MobiDB-lite"/>
    </source>
</evidence>
<evidence type="ECO:0000305" key="3"/>
<feature type="initiator methionine" description="Removed" evidence="1">
    <location>
        <position position="1"/>
    </location>
</feature>
<feature type="chain" id="PRO_0000371579" description="Small ribosomal subunit protein uS2">
    <location>
        <begin position="2"/>
        <end position="301"/>
    </location>
</feature>
<feature type="region of interest" description="Disordered" evidence="2">
    <location>
        <begin position="237"/>
        <end position="301"/>
    </location>
</feature>
<feature type="compositionally biased region" description="Low complexity" evidence="2">
    <location>
        <begin position="264"/>
        <end position="278"/>
    </location>
</feature>
<dbReference type="EMBL" id="DQ673408">
    <property type="protein sequence ID" value="ABG81981.1"/>
    <property type="molecule type" value="mRNA"/>
</dbReference>
<dbReference type="RefSeq" id="NP_001316115.1">
    <property type="nucleotide sequence ID" value="NM_001329186.1"/>
</dbReference>
<dbReference type="SMR" id="Q0PXX8"/>
<dbReference type="STRING" id="121845.Q0PXX8"/>
<dbReference type="PaxDb" id="121845-Q0PXX8"/>
<dbReference type="EnsemblMetazoa" id="NM_001329186.1">
    <property type="protein sequence ID" value="NP_001316115.1"/>
    <property type="gene ID" value="LOC103518740"/>
</dbReference>
<dbReference type="GeneID" id="103518740"/>
<dbReference type="KEGG" id="dci:103518740"/>
<dbReference type="CTD" id="104044"/>
<dbReference type="OrthoDB" id="414863at2759"/>
<dbReference type="Proteomes" id="UP000079169">
    <property type="component" value="Unplaced"/>
</dbReference>
<dbReference type="GO" id="GO:0022627">
    <property type="term" value="C:cytosolic small ribosomal subunit"/>
    <property type="evidence" value="ECO:0007669"/>
    <property type="project" value="UniProtKB-UniRule"/>
</dbReference>
<dbReference type="GO" id="GO:0003735">
    <property type="term" value="F:structural constituent of ribosome"/>
    <property type="evidence" value="ECO:0007669"/>
    <property type="project" value="UniProtKB-UniRule"/>
</dbReference>
<dbReference type="GO" id="GO:0000028">
    <property type="term" value="P:ribosomal small subunit assembly"/>
    <property type="evidence" value="ECO:0007669"/>
    <property type="project" value="UniProtKB-UniRule"/>
</dbReference>
<dbReference type="GO" id="GO:0006412">
    <property type="term" value="P:translation"/>
    <property type="evidence" value="ECO:0007669"/>
    <property type="project" value="UniProtKB-UniRule"/>
</dbReference>
<dbReference type="CDD" id="cd01425">
    <property type="entry name" value="RPS2"/>
    <property type="match status" value="1"/>
</dbReference>
<dbReference type="FunFam" id="3.40.50.10490:FF:000012">
    <property type="entry name" value="40S ribosomal protein SA"/>
    <property type="match status" value="1"/>
</dbReference>
<dbReference type="Gene3D" id="3.40.50.10490">
    <property type="entry name" value="Glucose-6-phosphate isomerase like protein, domain 1"/>
    <property type="match status" value="1"/>
</dbReference>
<dbReference type="HAMAP" id="MF_03015">
    <property type="entry name" value="Ribosomal_S2_euk"/>
    <property type="match status" value="1"/>
</dbReference>
<dbReference type="InterPro" id="IPR001865">
    <property type="entry name" value="Ribosomal_uS2"/>
</dbReference>
<dbReference type="InterPro" id="IPR032281">
    <property type="entry name" value="Ribosomal_uS2_C"/>
</dbReference>
<dbReference type="InterPro" id="IPR018130">
    <property type="entry name" value="Ribosomal_uS2_CS"/>
</dbReference>
<dbReference type="InterPro" id="IPR027498">
    <property type="entry name" value="Ribosomal_uS2_euk"/>
</dbReference>
<dbReference type="InterPro" id="IPR005707">
    <property type="entry name" value="Ribosomal_uS2_euk/arc"/>
</dbReference>
<dbReference type="InterPro" id="IPR023591">
    <property type="entry name" value="Ribosomal_uS2_flav_dom_sf"/>
</dbReference>
<dbReference type="NCBIfam" id="TIGR01012">
    <property type="entry name" value="uS2_euk_arch"/>
    <property type="match status" value="1"/>
</dbReference>
<dbReference type="PANTHER" id="PTHR11489">
    <property type="entry name" value="40S RIBOSOMAL PROTEIN SA"/>
    <property type="match status" value="1"/>
</dbReference>
<dbReference type="Pfam" id="PF16122">
    <property type="entry name" value="40S_SA_C"/>
    <property type="match status" value="1"/>
</dbReference>
<dbReference type="Pfam" id="PF00318">
    <property type="entry name" value="Ribosomal_S2"/>
    <property type="match status" value="2"/>
</dbReference>
<dbReference type="PRINTS" id="PR00395">
    <property type="entry name" value="RIBOSOMALS2"/>
</dbReference>
<dbReference type="SUPFAM" id="SSF52313">
    <property type="entry name" value="Ribosomal protein S2"/>
    <property type="match status" value="1"/>
</dbReference>
<dbReference type="PROSITE" id="PS00962">
    <property type="entry name" value="RIBOSOMAL_S2_1"/>
    <property type="match status" value="1"/>
</dbReference>
<dbReference type="PROSITE" id="PS00963">
    <property type="entry name" value="RIBOSOMAL_S2_2"/>
    <property type="match status" value="1"/>
</dbReference>
<proteinExistence type="evidence at transcript level"/>
<comment type="function">
    <text evidence="1">Required for the assembly and/or stability of the 40S ribosomal subunit. Required for the processing of the 20S rRNA-precursor to mature 18S rRNA in a late step of the maturation of 40S ribosomal subunits.</text>
</comment>
<comment type="subunit">
    <text evidence="1">Component of the small ribosomal subunit. Mature ribosomes consist of a small (40S) and a large (60S) subunit. The 40S subunit contains about 33 different proteins and 1 molecule of RNA (18S). The 60S subunit contains about 49 different proteins and 3 molecules of RNA (28S, 5.8S and 5S). Interacts with ribosomal protein S21.</text>
</comment>
<comment type="subcellular location">
    <subcellularLocation>
        <location evidence="1">Cytoplasm</location>
    </subcellularLocation>
</comment>
<comment type="similarity">
    <text evidence="1">Belongs to the universal ribosomal protein uS2 family.</text>
</comment>
<keyword id="KW-0963">Cytoplasm</keyword>
<keyword id="KW-1185">Reference proteome</keyword>
<keyword id="KW-0687">Ribonucleoprotein</keyword>
<keyword id="KW-0689">Ribosomal protein</keyword>
<sequence length="301" mass="33337">MSGGLDILSLKEDDVTKMLGAQTHIGSENSDYQMEQYVYKRRNDGVHILNLRRTWEKLLLAARAIVAIEHPADVFVISSRPIGQRAVLKFASYTGATPIAGRFTPGAFTNQIQAAFREPRLLVVTDPHTDHQPITEAAYVNIPVIAFCNTESPLRFVDIAIPCNNKSPHSIGLMWWLLAREVLRFRGTIPREPKWDVVVDLFFYRDPEEAEKEEQAGKESAAAIADKPADEFAAHAPTESWNDTVVPSADLAPQSWAEESASIPQYAPAPQAAAAPVADDWTTPVGADDWGQDWSNSTSQW</sequence>
<name>RSSA_DIACI</name>